<protein>
    <recommendedName>
        <fullName evidence="1">Succinyl-diaminopimelate desuccinylase</fullName>
        <shortName evidence="1">SDAP desuccinylase</shortName>
        <ecNumber evidence="1">3.5.1.18</ecNumber>
    </recommendedName>
    <alternativeName>
        <fullName evidence="1">N-succinyl-LL-2,6-diaminoheptanedioate amidohydrolase</fullName>
    </alternativeName>
</protein>
<sequence length="383" mass="42306">MDALEITQKLISYPTITPKECGIFEYIKSLFPHFKTLECGENGVKNLFLYRIFNPPKDHAEEKHAKENVKPLHFSFAGHIDVVPPGDHWQNDPFKPVIKEGFLYGRGAQDMKGGVGAFLSASLNFNPKTPFLLSILLTSDEEGPGIFGTKLMLEKLKEKDLLPHMAIVAEPTCEKVLGDSIKIGRRGSINGKLILKGIQGHAAYPKKCQNPIDTLASVLPLISGVNLDDGDEYFDPSKLVITNLHAGLGANNVTPASVEIIFNARHSLKTTKESLKEYLEKVLKDLPHTLELESSSSPFITASHSKLTSVLKENILKTCRTTPLLNTKGGTSDARFFSAHGIEVVEFGVINDRIHAIDERVSLKELELLEKVFLGVLEDLSEK</sequence>
<evidence type="ECO:0000255" key="1">
    <source>
        <dbReference type="HAMAP-Rule" id="MF_01690"/>
    </source>
</evidence>
<name>DAPE_HELPH</name>
<feature type="chain" id="PRO_0000375588" description="Succinyl-diaminopimelate desuccinylase">
    <location>
        <begin position="1"/>
        <end position="383"/>
    </location>
</feature>
<feature type="active site" evidence="1">
    <location>
        <position position="81"/>
    </location>
</feature>
<feature type="active site" description="Proton acceptor" evidence="1">
    <location>
        <position position="141"/>
    </location>
</feature>
<feature type="binding site" evidence="1">
    <location>
        <position position="79"/>
    </location>
    <ligand>
        <name>Zn(2+)</name>
        <dbReference type="ChEBI" id="CHEBI:29105"/>
        <label>1</label>
    </ligand>
</feature>
<feature type="binding site" evidence="1">
    <location>
        <position position="110"/>
    </location>
    <ligand>
        <name>Zn(2+)</name>
        <dbReference type="ChEBI" id="CHEBI:29105"/>
        <label>1</label>
    </ligand>
</feature>
<feature type="binding site" evidence="1">
    <location>
        <position position="110"/>
    </location>
    <ligand>
        <name>Zn(2+)</name>
        <dbReference type="ChEBI" id="CHEBI:29105"/>
        <label>2</label>
    </ligand>
</feature>
<feature type="binding site" evidence="1">
    <location>
        <position position="142"/>
    </location>
    <ligand>
        <name>Zn(2+)</name>
        <dbReference type="ChEBI" id="CHEBI:29105"/>
        <label>2</label>
    </ligand>
</feature>
<feature type="binding site" evidence="1">
    <location>
        <position position="170"/>
    </location>
    <ligand>
        <name>Zn(2+)</name>
        <dbReference type="ChEBI" id="CHEBI:29105"/>
        <label>1</label>
    </ligand>
</feature>
<feature type="binding site" evidence="1">
    <location>
        <position position="355"/>
    </location>
    <ligand>
        <name>Zn(2+)</name>
        <dbReference type="ChEBI" id="CHEBI:29105"/>
        <label>2</label>
    </ligand>
</feature>
<accession>Q1CUU2</accession>
<reference key="1">
    <citation type="journal article" date="2006" name="Proc. Natl. Acad. Sci. U.S.A.">
        <title>The complete genome sequence of a chronic atrophic gastritis Helicobacter pylori strain: evolution during disease progression.</title>
        <authorList>
            <person name="Oh J.D."/>
            <person name="Kling-Baeckhed H."/>
            <person name="Giannakis M."/>
            <person name="Xu J."/>
            <person name="Fulton R.S."/>
            <person name="Fulton L.A."/>
            <person name="Cordum H.S."/>
            <person name="Wang C."/>
            <person name="Elliott G."/>
            <person name="Edwards J."/>
            <person name="Mardis E.R."/>
            <person name="Engstrand L.G."/>
            <person name="Gordon J.I."/>
        </authorList>
    </citation>
    <scope>NUCLEOTIDE SEQUENCE [LARGE SCALE GENOMIC DNA]</scope>
    <source>
        <strain>HPAG1</strain>
    </source>
</reference>
<gene>
    <name evidence="1" type="primary">dapE</name>
    <name type="ordered locus">HPAG1_0213</name>
</gene>
<dbReference type="EC" id="3.5.1.18" evidence="1"/>
<dbReference type="EMBL" id="CP000241">
    <property type="protein sequence ID" value="ABF84280.1"/>
    <property type="molecule type" value="Genomic_DNA"/>
</dbReference>
<dbReference type="RefSeq" id="WP_000339190.1">
    <property type="nucleotide sequence ID" value="NC_008086.1"/>
</dbReference>
<dbReference type="SMR" id="Q1CUU2"/>
<dbReference type="KEGG" id="hpa:HPAG1_0213"/>
<dbReference type="HOGENOM" id="CLU_021802_4_0_7"/>
<dbReference type="UniPathway" id="UPA00034">
    <property type="reaction ID" value="UER00021"/>
</dbReference>
<dbReference type="GO" id="GO:0008777">
    <property type="term" value="F:acetylornithine deacetylase activity"/>
    <property type="evidence" value="ECO:0007669"/>
    <property type="project" value="TreeGrafter"/>
</dbReference>
<dbReference type="GO" id="GO:0046872">
    <property type="term" value="F:metal ion binding"/>
    <property type="evidence" value="ECO:0007669"/>
    <property type="project" value="UniProtKB-KW"/>
</dbReference>
<dbReference type="GO" id="GO:0009014">
    <property type="term" value="F:succinyl-diaminopimelate desuccinylase activity"/>
    <property type="evidence" value="ECO:0007669"/>
    <property type="project" value="UniProtKB-EC"/>
</dbReference>
<dbReference type="GO" id="GO:0019877">
    <property type="term" value="P:diaminopimelate biosynthetic process"/>
    <property type="evidence" value="ECO:0007669"/>
    <property type="project" value="UniProtKB-KW"/>
</dbReference>
<dbReference type="GO" id="GO:0006526">
    <property type="term" value="P:L-arginine biosynthetic process"/>
    <property type="evidence" value="ECO:0007669"/>
    <property type="project" value="TreeGrafter"/>
</dbReference>
<dbReference type="GO" id="GO:0009089">
    <property type="term" value="P:lysine biosynthetic process via diaminopimelate"/>
    <property type="evidence" value="ECO:0007669"/>
    <property type="project" value="UniProtKB-UniPathway"/>
</dbReference>
<dbReference type="CDD" id="cd03891">
    <property type="entry name" value="M20_DapE_proteobac"/>
    <property type="match status" value="1"/>
</dbReference>
<dbReference type="FunFam" id="3.30.70.360:FF:000011">
    <property type="entry name" value="Succinyl-diaminopimelate desuccinylase"/>
    <property type="match status" value="1"/>
</dbReference>
<dbReference type="FunFam" id="3.40.630.10:FF:000126">
    <property type="entry name" value="Succinyl-diaminopimelate desuccinylase"/>
    <property type="match status" value="1"/>
</dbReference>
<dbReference type="Gene3D" id="3.40.630.10">
    <property type="entry name" value="Zn peptidases"/>
    <property type="match status" value="2"/>
</dbReference>
<dbReference type="HAMAP" id="MF_01690">
    <property type="entry name" value="DapE"/>
    <property type="match status" value="1"/>
</dbReference>
<dbReference type="InterPro" id="IPR001261">
    <property type="entry name" value="ArgE/DapE_CS"/>
</dbReference>
<dbReference type="InterPro" id="IPR036264">
    <property type="entry name" value="Bact_exopeptidase_dim_dom"/>
</dbReference>
<dbReference type="InterPro" id="IPR005941">
    <property type="entry name" value="DapE_proteobac"/>
</dbReference>
<dbReference type="InterPro" id="IPR002933">
    <property type="entry name" value="Peptidase_M20"/>
</dbReference>
<dbReference type="InterPro" id="IPR011650">
    <property type="entry name" value="Peptidase_M20_dimer"/>
</dbReference>
<dbReference type="InterPro" id="IPR050072">
    <property type="entry name" value="Peptidase_M20A"/>
</dbReference>
<dbReference type="NCBIfam" id="TIGR01246">
    <property type="entry name" value="dapE_proteo"/>
    <property type="match status" value="1"/>
</dbReference>
<dbReference type="NCBIfam" id="NF009557">
    <property type="entry name" value="PRK13009.1"/>
    <property type="match status" value="1"/>
</dbReference>
<dbReference type="PANTHER" id="PTHR43808">
    <property type="entry name" value="ACETYLORNITHINE DEACETYLASE"/>
    <property type="match status" value="1"/>
</dbReference>
<dbReference type="PANTHER" id="PTHR43808:SF31">
    <property type="entry name" value="N-ACETYL-L-CITRULLINE DEACETYLASE"/>
    <property type="match status" value="1"/>
</dbReference>
<dbReference type="Pfam" id="PF07687">
    <property type="entry name" value="M20_dimer"/>
    <property type="match status" value="1"/>
</dbReference>
<dbReference type="Pfam" id="PF01546">
    <property type="entry name" value="Peptidase_M20"/>
    <property type="match status" value="1"/>
</dbReference>
<dbReference type="SUPFAM" id="SSF55031">
    <property type="entry name" value="Bacterial exopeptidase dimerisation domain"/>
    <property type="match status" value="1"/>
</dbReference>
<dbReference type="SUPFAM" id="SSF53187">
    <property type="entry name" value="Zn-dependent exopeptidases"/>
    <property type="match status" value="1"/>
</dbReference>
<dbReference type="PROSITE" id="PS00759">
    <property type="entry name" value="ARGE_DAPE_CPG2_2"/>
    <property type="match status" value="1"/>
</dbReference>
<keyword id="KW-0028">Amino-acid biosynthesis</keyword>
<keyword id="KW-0170">Cobalt</keyword>
<keyword id="KW-0220">Diaminopimelate biosynthesis</keyword>
<keyword id="KW-0378">Hydrolase</keyword>
<keyword id="KW-0457">Lysine biosynthesis</keyword>
<keyword id="KW-0479">Metal-binding</keyword>
<keyword id="KW-0862">Zinc</keyword>
<organism>
    <name type="scientific">Helicobacter pylori (strain HPAG1)</name>
    <dbReference type="NCBI Taxonomy" id="357544"/>
    <lineage>
        <taxon>Bacteria</taxon>
        <taxon>Pseudomonadati</taxon>
        <taxon>Campylobacterota</taxon>
        <taxon>Epsilonproteobacteria</taxon>
        <taxon>Campylobacterales</taxon>
        <taxon>Helicobacteraceae</taxon>
        <taxon>Helicobacter</taxon>
    </lineage>
</organism>
<comment type="function">
    <text evidence="1">Catalyzes the hydrolysis of N-succinyl-L,L-diaminopimelic acid (SDAP), forming succinate and LL-2,6-diaminopimelate (DAP), an intermediate involved in the bacterial biosynthesis of lysine and meso-diaminopimelic acid, an essential component of bacterial cell walls.</text>
</comment>
<comment type="catalytic activity">
    <reaction evidence="1">
        <text>N-succinyl-(2S,6S)-2,6-diaminopimelate + H2O = (2S,6S)-2,6-diaminopimelate + succinate</text>
        <dbReference type="Rhea" id="RHEA:22608"/>
        <dbReference type="ChEBI" id="CHEBI:15377"/>
        <dbReference type="ChEBI" id="CHEBI:30031"/>
        <dbReference type="ChEBI" id="CHEBI:57609"/>
        <dbReference type="ChEBI" id="CHEBI:58087"/>
        <dbReference type="EC" id="3.5.1.18"/>
    </reaction>
</comment>
<comment type="cofactor">
    <cofactor evidence="1">
        <name>Zn(2+)</name>
        <dbReference type="ChEBI" id="CHEBI:29105"/>
    </cofactor>
    <cofactor evidence="1">
        <name>Co(2+)</name>
        <dbReference type="ChEBI" id="CHEBI:48828"/>
    </cofactor>
    <text evidence="1">Binds 2 Zn(2+) or Co(2+) ions per subunit.</text>
</comment>
<comment type="pathway">
    <text evidence="1">Amino-acid biosynthesis; L-lysine biosynthesis via DAP pathway; LL-2,6-diaminopimelate from (S)-tetrahydrodipicolinate (succinylase route): step 3/3.</text>
</comment>
<comment type="subunit">
    <text evidence="1">Homodimer.</text>
</comment>
<comment type="similarity">
    <text evidence="1">Belongs to the peptidase M20A family. DapE subfamily.</text>
</comment>
<proteinExistence type="inferred from homology"/>